<protein>
    <recommendedName>
        <fullName evidence="1">Thiazole synthase</fullName>
        <ecNumber evidence="1">2.8.1.10</ecNumber>
    </recommendedName>
</protein>
<accession>A8M4E3</accession>
<feature type="chain" id="PRO_1000196891" description="Thiazole synthase">
    <location>
        <begin position="1"/>
        <end position="259"/>
    </location>
</feature>
<feature type="active site" description="Schiff-base intermediate with DXP" evidence="1">
    <location>
        <position position="100"/>
    </location>
</feature>
<feature type="binding site" evidence="1">
    <location>
        <position position="161"/>
    </location>
    <ligand>
        <name>1-deoxy-D-xylulose 5-phosphate</name>
        <dbReference type="ChEBI" id="CHEBI:57792"/>
    </ligand>
</feature>
<feature type="binding site" evidence="1">
    <location>
        <begin position="187"/>
        <end position="188"/>
    </location>
    <ligand>
        <name>1-deoxy-D-xylulose 5-phosphate</name>
        <dbReference type="ChEBI" id="CHEBI:57792"/>
    </ligand>
</feature>
<feature type="binding site" evidence="1">
    <location>
        <begin position="209"/>
        <end position="210"/>
    </location>
    <ligand>
        <name>1-deoxy-D-xylulose 5-phosphate</name>
        <dbReference type="ChEBI" id="CHEBI:57792"/>
    </ligand>
</feature>
<organism>
    <name type="scientific">Salinispora arenicola (strain CNS-205)</name>
    <dbReference type="NCBI Taxonomy" id="391037"/>
    <lineage>
        <taxon>Bacteria</taxon>
        <taxon>Bacillati</taxon>
        <taxon>Actinomycetota</taxon>
        <taxon>Actinomycetes</taxon>
        <taxon>Micromonosporales</taxon>
        <taxon>Micromonosporaceae</taxon>
        <taxon>Salinispora</taxon>
    </lineage>
</organism>
<dbReference type="EC" id="2.8.1.10" evidence="1"/>
<dbReference type="EMBL" id="CP000850">
    <property type="protein sequence ID" value="ABW00059.1"/>
    <property type="molecule type" value="Genomic_DNA"/>
</dbReference>
<dbReference type="SMR" id="A8M4E3"/>
<dbReference type="STRING" id="391037.Sare_4277"/>
<dbReference type="KEGG" id="saq:Sare_4277"/>
<dbReference type="PATRIC" id="fig|391037.6.peg.4318"/>
<dbReference type="eggNOG" id="COG2022">
    <property type="taxonomic scope" value="Bacteria"/>
</dbReference>
<dbReference type="HOGENOM" id="CLU_062233_1_0_11"/>
<dbReference type="OrthoDB" id="9805935at2"/>
<dbReference type="UniPathway" id="UPA00060"/>
<dbReference type="GO" id="GO:0005737">
    <property type="term" value="C:cytoplasm"/>
    <property type="evidence" value="ECO:0007669"/>
    <property type="project" value="UniProtKB-SubCell"/>
</dbReference>
<dbReference type="GO" id="GO:1990107">
    <property type="term" value="F:thiazole synthase activity"/>
    <property type="evidence" value="ECO:0007669"/>
    <property type="project" value="UniProtKB-EC"/>
</dbReference>
<dbReference type="GO" id="GO:0009229">
    <property type="term" value="P:thiamine diphosphate biosynthetic process"/>
    <property type="evidence" value="ECO:0007669"/>
    <property type="project" value="UniProtKB-UniRule"/>
</dbReference>
<dbReference type="CDD" id="cd04728">
    <property type="entry name" value="ThiG"/>
    <property type="match status" value="1"/>
</dbReference>
<dbReference type="Gene3D" id="3.20.20.70">
    <property type="entry name" value="Aldolase class I"/>
    <property type="match status" value="1"/>
</dbReference>
<dbReference type="HAMAP" id="MF_00443">
    <property type="entry name" value="ThiG"/>
    <property type="match status" value="1"/>
</dbReference>
<dbReference type="InterPro" id="IPR013785">
    <property type="entry name" value="Aldolase_TIM"/>
</dbReference>
<dbReference type="InterPro" id="IPR033983">
    <property type="entry name" value="Thiazole_synthase_ThiG"/>
</dbReference>
<dbReference type="InterPro" id="IPR008867">
    <property type="entry name" value="ThiG"/>
</dbReference>
<dbReference type="PANTHER" id="PTHR34266">
    <property type="entry name" value="THIAZOLE SYNTHASE"/>
    <property type="match status" value="1"/>
</dbReference>
<dbReference type="PANTHER" id="PTHR34266:SF2">
    <property type="entry name" value="THIAZOLE SYNTHASE"/>
    <property type="match status" value="1"/>
</dbReference>
<dbReference type="Pfam" id="PF05690">
    <property type="entry name" value="ThiG"/>
    <property type="match status" value="1"/>
</dbReference>
<dbReference type="SUPFAM" id="SSF110399">
    <property type="entry name" value="ThiG-like"/>
    <property type="match status" value="1"/>
</dbReference>
<keyword id="KW-0963">Cytoplasm</keyword>
<keyword id="KW-0704">Schiff base</keyword>
<keyword id="KW-0784">Thiamine biosynthesis</keyword>
<keyword id="KW-0808">Transferase</keyword>
<gene>
    <name evidence="1" type="primary">thiG</name>
    <name type="ordered locus">Sare_4277</name>
</gene>
<name>THIG_SALAI</name>
<sequence length="259" mass="26741">MSGVSFELGGVSISSRLVLGTGGAANLHVLEQAIRAAGTGLVTVALRRVDSTPGGSGGLLDLIDRCGVRLLPNTAGCYTAGEAVKVAHLAREAFDTDWVKLEVIGDERTLLPDGVELLRAAEELVAEGFTVLPYTSDDPILARRLADVGCAAVMPAGSPIGSGLGVSNPHHIRLIRQCVDVPVILDAGIGTASDAALAMELGCDAVLLASAVTRAADPVAMATAMRYAVEAGRLAYRAGRIPRRFHALASTPDDGRPEL</sequence>
<evidence type="ECO:0000255" key="1">
    <source>
        <dbReference type="HAMAP-Rule" id="MF_00443"/>
    </source>
</evidence>
<comment type="function">
    <text evidence="1">Catalyzes the rearrangement of 1-deoxy-D-xylulose 5-phosphate (DXP) to produce the thiazole phosphate moiety of thiamine. Sulfur is provided by the thiocarboxylate moiety of the carrier protein ThiS. In vitro, sulfur can be provided by H(2)S.</text>
</comment>
<comment type="catalytic activity">
    <reaction evidence="1">
        <text>[ThiS sulfur-carrier protein]-C-terminal-Gly-aminoethanethioate + 2-iminoacetate + 1-deoxy-D-xylulose 5-phosphate = [ThiS sulfur-carrier protein]-C-terminal Gly-Gly + 2-[(2R,5Z)-2-carboxy-4-methylthiazol-5(2H)-ylidene]ethyl phosphate + 2 H2O + H(+)</text>
        <dbReference type="Rhea" id="RHEA:26297"/>
        <dbReference type="Rhea" id="RHEA-COMP:12909"/>
        <dbReference type="Rhea" id="RHEA-COMP:19908"/>
        <dbReference type="ChEBI" id="CHEBI:15377"/>
        <dbReference type="ChEBI" id="CHEBI:15378"/>
        <dbReference type="ChEBI" id="CHEBI:57792"/>
        <dbReference type="ChEBI" id="CHEBI:62899"/>
        <dbReference type="ChEBI" id="CHEBI:77846"/>
        <dbReference type="ChEBI" id="CHEBI:90778"/>
        <dbReference type="ChEBI" id="CHEBI:232372"/>
        <dbReference type="EC" id="2.8.1.10"/>
    </reaction>
</comment>
<comment type="pathway">
    <text evidence="1">Cofactor biosynthesis; thiamine diphosphate biosynthesis.</text>
</comment>
<comment type="subunit">
    <text evidence="1">Homotetramer. Forms heterodimers with either ThiH or ThiS.</text>
</comment>
<comment type="subcellular location">
    <subcellularLocation>
        <location evidence="1">Cytoplasm</location>
    </subcellularLocation>
</comment>
<comment type="similarity">
    <text evidence="1">Belongs to the ThiG family.</text>
</comment>
<proteinExistence type="inferred from homology"/>
<reference key="1">
    <citation type="submission" date="2007-10" db="EMBL/GenBank/DDBJ databases">
        <title>Complete sequence of Salinispora arenicola CNS-205.</title>
        <authorList>
            <consortium name="US DOE Joint Genome Institute"/>
            <person name="Copeland A."/>
            <person name="Lucas S."/>
            <person name="Lapidus A."/>
            <person name="Barry K."/>
            <person name="Glavina del Rio T."/>
            <person name="Dalin E."/>
            <person name="Tice H."/>
            <person name="Pitluck S."/>
            <person name="Foster B."/>
            <person name="Schmutz J."/>
            <person name="Larimer F."/>
            <person name="Land M."/>
            <person name="Hauser L."/>
            <person name="Kyrpides N."/>
            <person name="Ivanova N."/>
            <person name="Jensen P.R."/>
            <person name="Moore B.S."/>
            <person name="Penn K."/>
            <person name="Jenkins C."/>
            <person name="Udwary D."/>
            <person name="Xiang L."/>
            <person name="Gontang E."/>
            <person name="Richardson P."/>
        </authorList>
    </citation>
    <scope>NUCLEOTIDE SEQUENCE [LARGE SCALE GENOMIC DNA]</scope>
    <source>
        <strain>CNS-205</strain>
    </source>
</reference>